<evidence type="ECO:0000250" key="1"/>
<evidence type="ECO:0000255" key="2"/>
<evidence type="ECO:0000255" key="3">
    <source>
        <dbReference type="PROSITE-ProRule" id="PRU00077"/>
    </source>
</evidence>
<evidence type="ECO:0000255" key="4">
    <source>
        <dbReference type="PROSITE-ProRule" id="PRU00448"/>
    </source>
</evidence>
<evidence type="ECO:0000256" key="5">
    <source>
        <dbReference type="SAM" id="MobiDB-lite"/>
    </source>
</evidence>
<evidence type="ECO:0000305" key="6"/>
<reference key="1">
    <citation type="journal article" date="2008" name="Genome Biol.">
        <title>The genome sequence of the model ascomycete fungus Podospora anserina.</title>
        <authorList>
            <person name="Espagne E."/>
            <person name="Lespinet O."/>
            <person name="Malagnac F."/>
            <person name="Da Silva C."/>
            <person name="Jaillon O."/>
            <person name="Porcel B.M."/>
            <person name="Couloux A."/>
            <person name="Aury J.-M."/>
            <person name="Segurens B."/>
            <person name="Poulain J."/>
            <person name="Anthouard V."/>
            <person name="Grossetete S."/>
            <person name="Khalili H."/>
            <person name="Coppin E."/>
            <person name="Dequard-Chablat M."/>
            <person name="Picard M."/>
            <person name="Contamine V."/>
            <person name="Arnaise S."/>
            <person name="Bourdais A."/>
            <person name="Berteaux-Lecellier V."/>
            <person name="Gautheret D."/>
            <person name="de Vries R.P."/>
            <person name="Battaglia E."/>
            <person name="Coutinho P.M."/>
            <person name="Danchin E.G.J."/>
            <person name="Henrissat B."/>
            <person name="El Khoury R."/>
            <person name="Sainsard-Chanet A."/>
            <person name="Boivin A."/>
            <person name="Pinan-Lucarre B."/>
            <person name="Sellem C.H."/>
            <person name="Debuchy R."/>
            <person name="Wincker P."/>
            <person name="Weissenbach J."/>
            <person name="Silar P."/>
        </authorList>
    </citation>
    <scope>NUCLEOTIDE SEQUENCE [LARGE SCALE GENOMIC DNA]</scope>
    <source>
        <strain>S / ATCC MYA-4624 / DSM 980 / FGSC 10383</strain>
    </source>
</reference>
<reference key="2">
    <citation type="journal article" date="2014" name="Genetics">
        <title>Maintaining two mating types: Structure of the mating type locus and its role in heterokaryosis in Podospora anserina.</title>
        <authorList>
            <person name="Grognet P."/>
            <person name="Bidard F."/>
            <person name="Kuchly C."/>
            <person name="Tong L.C.H."/>
            <person name="Coppin E."/>
            <person name="Benkhali J.A."/>
            <person name="Couloux A."/>
            <person name="Wincker P."/>
            <person name="Debuchy R."/>
            <person name="Silar P."/>
        </authorList>
    </citation>
    <scope>GENOME REANNOTATION</scope>
    <source>
        <strain>S / ATCC MYA-4624 / DSM 980 / FGSC 10383</strain>
    </source>
</reference>
<protein>
    <recommendedName>
        <fullName>Actin cytoskeleton-regulatory complex protein END3</fullName>
    </recommendedName>
    <alternativeName>
        <fullName>Endocytosis protein 3</fullName>
    </alternativeName>
</protein>
<sequence>MAPRIEPQEIETYWNIFSTRTNGGQFLTGEMAAPVLKNSGLRDDQLERVWDLADVDNDGNLDFEEFCVAMRVIFDLLNGEYADVPKVLPDWLVPESKSHLVSANKAIRGQEPKMERVEDEEEEEGLKDGFDWYMSPEDKSRYEAVYREGRDMRGEINFEALSDLYNSLDVPDTDVRSAWNLINPNASQTINKDACLAFLHILNYRHEGYRIPRTVPASLRASFERNQIDYQVDNQAAKSRWATKADDETSTGRKAKFGDQYLTRLGRSGFTSKGTDFTTTKNSDAEWEEVRLKKQLQELEDKLARIEQGVEARKGGKRDSKPALVKRELEQLLDYKRKELRDLEEGKGKSRTGSNLKSVSEDLQTVREQVEGLESHLRSRQEVLEQLRREIEEEKISR</sequence>
<comment type="function">
    <text evidence="1">Component of the PAN1 actin cytoskeleton-regulatory complex required for the internalization of endosomes during actin-coupled endocytosis. The complex links the site of endocytosis to the cell membrane-associated actin cytoskeleton. Mediates uptake of external molecules and vacuolar degradation of plasma membrane proteins. Plays a role in the proper organization of the cell membrane-associated actin cytoskeleton and promotes its destabilization (By similarity).</text>
</comment>
<comment type="subunit">
    <text evidence="1">Component of the PAN1 actin cytoskeleton-regulatory complex.</text>
</comment>
<comment type="subcellular location">
    <subcellularLocation>
        <location evidence="1">Cell membrane</location>
        <topology evidence="1">Peripheral membrane protein</topology>
        <orientation evidence="1">Cytoplasmic side</orientation>
    </subcellularLocation>
    <subcellularLocation>
        <location evidence="1">Endosome membrane</location>
        <topology evidence="1">Peripheral membrane protein</topology>
        <orientation evidence="1">Cytoplasmic side</orientation>
    </subcellularLocation>
    <subcellularLocation>
        <location evidence="1">Cytoplasm</location>
        <location evidence="1">Cytoskeleton</location>
        <location evidence="1">Actin patch</location>
    </subcellularLocation>
    <text evidence="1">Cytoplasmic and cortical actin patches.</text>
</comment>
<comment type="similarity">
    <text evidence="6">Belongs to the END3 family.</text>
</comment>
<keyword id="KW-0009">Actin-binding</keyword>
<keyword id="KW-0106">Calcium</keyword>
<keyword id="KW-1003">Cell membrane</keyword>
<keyword id="KW-0175">Coiled coil</keyword>
<keyword id="KW-0963">Cytoplasm</keyword>
<keyword id="KW-0206">Cytoskeleton</keyword>
<keyword id="KW-0254">Endocytosis</keyword>
<keyword id="KW-0967">Endosome</keyword>
<keyword id="KW-0472">Membrane</keyword>
<keyword id="KW-0479">Metal-binding</keyword>
<keyword id="KW-1185">Reference proteome</keyword>
<keyword id="KW-0677">Repeat</keyword>
<proteinExistence type="inferred from homology"/>
<organism>
    <name type="scientific">Podospora anserina (strain S / ATCC MYA-4624 / DSM 980 / FGSC 10383)</name>
    <name type="common">Pleurage anserina</name>
    <dbReference type="NCBI Taxonomy" id="515849"/>
    <lineage>
        <taxon>Eukaryota</taxon>
        <taxon>Fungi</taxon>
        <taxon>Dikarya</taxon>
        <taxon>Ascomycota</taxon>
        <taxon>Pezizomycotina</taxon>
        <taxon>Sordariomycetes</taxon>
        <taxon>Sordariomycetidae</taxon>
        <taxon>Sordariales</taxon>
        <taxon>Podosporaceae</taxon>
        <taxon>Podospora</taxon>
        <taxon>Podospora anserina</taxon>
    </lineage>
</organism>
<accession>B2AS96</accession>
<accession>A0A090CB77</accession>
<gene>
    <name type="primary">END3</name>
    <name type="ordered locus">Pa_1_22780</name>
    <name type="ORF">PODANS_1_22780</name>
</gene>
<name>END3_PODAN</name>
<feature type="chain" id="PRO_0000349456" description="Actin cytoskeleton-regulatory complex protein END3">
    <location>
        <begin position="1"/>
        <end position="398"/>
    </location>
</feature>
<feature type="domain" description="EH 1" evidence="3">
    <location>
        <begin position="9"/>
        <end position="99"/>
    </location>
</feature>
<feature type="domain" description="EF-hand 1" evidence="4">
    <location>
        <begin position="41"/>
        <end position="76"/>
    </location>
</feature>
<feature type="domain" description="EH 2" evidence="3">
    <location>
        <begin position="138"/>
        <end position="226"/>
    </location>
</feature>
<feature type="domain" description="EF-hand 2" evidence="4">
    <location>
        <begin position="170"/>
        <end position="205"/>
    </location>
</feature>
<feature type="region of interest" description="Disordered" evidence="5">
    <location>
        <begin position="343"/>
        <end position="363"/>
    </location>
</feature>
<feature type="coiled-coil region" evidence="2">
    <location>
        <begin position="279"/>
        <end position="398"/>
    </location>
</feature>
<feature type="compositionally biased region" description="Polar residues" evidence="5">
    <location>
        <begin position="351"/>
        <end position="363"/>
    </location>
</feature>
<feature type="binding site" evidence="4">
    <location>
        <position position="54"/>
    </location>
    <ligand>
        <name>Ca(2+)</name>
        <dbReference type="ChEBI" id="CHEBI:29108"/>
    </ligand>
</feature>
<feature type="binding site" evidence="4">
    <location>
        <position position="56"/>
    </location>
    <ligand>
        <name>Ca(2+)</name>
        <dbReference type="ChEBI" id="CHEBI:29108"/>
    </ligand>
</feature>
<feature type="binding site" evidence="4">
    <location>
        <position position="58"/>
    </location>
    <ligand>
        <name>Ca(2+)</name>
        <dbReference type="ChEBI" id="CHEBI:29108"/>
    </ligand>
</feature>
<feature type="binding site" evidence="4">
    <location>
        <position position="60"/>
    </location>
    <ligand>
        <name>Ca(2+)</name>
        <dbReference type="ChEBI" id="CHEBI:29108"/>
    </ligand>
</feature>
<feature type="binding site" evidence="4">
    <location>
        <position position="65"/>
    </location>
    <ligand>
        <name>Ca(2+)</name>
        <dbReference type="ChEBI" id="CHEBI:29108"/>
    </ligand>
</feature>
<dbReference type="EMBL" id="CU633897">
    <property type="protein sequence ID" value="CAP67269.1"/>
    <property type="molecule type" value="Genomic_DNA"/>
</dbReference>
<dbReference type="EMBL" id="FO904936">
    <property type="protein sequence ID" value="CDP24680.1"/>
    <property type="molecule type" value="Genomic_DNA"/>
</dbReference>
<dbReference type="RefSeq" id="XP_001906598.1">
    <property type="nucleotide sequence ID" value="XM_001906563.1"/>
</dbReference>
<dbReference type="FunCoup" id="B2AS96">
    <property type="interactions" value="94"/>
</dbReference>
<dbReference type="STRING" id="515849.B2AS96"/>
<dbReference type="GeneID" id="6190784"/>
<dbReference type="KEGG" id="pan:PODANSg3631"/>
<dbReference type="VEuPathDB" id="FungiDB:PODANS_1_22780"/>
<dbReference type="eggNOG" id="KOG0998">
    <property type="taxonomic scope" value="Eukaryota"/>
</dbReference>
<dbReference type="HOGENOM" id="CLU_040829_0_0_1"/>
<dbReference type="InParanoid" id="B2AS96"/>
<dbReference type="OrthoDB" id="1716625at2759"/>
<dbReference type="Proteomes" id="UP000001197">
    <property type="component" value="Chromosome 1"/>
</dbReference>
<dbReference type="GO" id="GO:0030479">
    <property type="term" value="C:actin cortical patch"/>
    <property type="evidence" value="ECO:0007669"/>
    <property type="project" value="UniProtKB-SubCell"/>
</dbReference>
<dbReference type="GO" id="GO:0010008">
    <property type="term" value="C:endosome membrane"/>
    <property type="evidence" value="ECO:0007669"/>
    <property type="project" value="UniProtKB-SubCell"/>
</dbReference>
<dbReference type="GO" id="GO:0005886">
    <property type="term" value="C:plasma membrane"/>
    <property type="evidence" value="ECO:0007669"/>
    <property type="project" value="UniProtKB-SubCell"/>
</dbReference>
<dbReference type="GO" id="GO:0003779">
    <property type="term" value="F:actin binding"/>
    <property type="evidence" value="ECO:0007669"/>
    <property type="project" value="UniProtKB-KW"/>
</dbReference>
<dbReference type="GO" id="GO:0005509">
    <property type="term" value="F:calcium ion binding"/>
    <property type="evidence" value="ECO:0007669"/>
    <property type="project" value="InterPro"/>
</dbReference>
<dbReference type="GO" id="GO:0007015">
    <property type="term" value="P:actin filament organization"/>
    <property type="evidence" value="ECO:0007669"/>
    <property type="project" value="InterPro"/>
</dbReference>
<dbReference type="GO" id="GO:0006897">
    <property type="term" value="P:endocytosis"/>
    <property type="evidence" value="ECO:0007669"/>
    <property type="project" value="UniProtKB-KW"/>
</dbReference>
<dbReference type="GO" id="GO:0016197">
    <property type="term" value="P:endosomal transport"/>
    <property type="evidence" value="ECO:0007669"/>
    <property type="project" value="TreeGrafter"/>
</dbReference>
<dbReference type="CDD" id="cd00052">
    <property type="entry name" value="EH"/>
    <property type="match status" value="1"/>
</dbReference>
<dbReference type="FunFam" id="1.10.238.10:FF:000339">
    <property type="entry name" value="Actin cytoskeleton-regulatory complex protein END3"/>
    <property type="match status" value="1"/>
</dbReference>
<dbReference type="Gene3D" id="1.10.238.10">
    <property type="entry name" value="EF-hand"/>
    <property type="match status" value="2"/>
</dbReference>
<dbReference type="InterPro" id="IPR011992">
    <property type="entry name" value="EF-hand-dom_pair"/>
</dbReference>
<dbReference type="InterPro" id="IPR018247">
    <property type="entry name" value="EF_Hand_1_Ca_BS"/>
</dbReference>
<dbReference type="InterPro" id="IPR002048">
    <property type="entry name" value="EF_hand_dom"/>
</dbReference>
<dbReference type="InterPro" id="IPR000261">
    <property type="entry name" value="EH_dom"/>
</dbReference>
<dbReference type="InterPro" id="IPR025604">
    <property type="entry name" value="End3"/>
</dbReference>
<dbReference type="PANTHER" id="PTHR11216:SF74">
    <property type="entry name" value="ACTIN CYTOSKELETON-REGULATORY COMPLEX PROTEIN END3"/>
    <property type="match status" value="1"/>
</dbReference>
<dbReference type="PANTHER" id="PTHR11216">
    <property type="entry name" value="EH DOMAIN"/>
    <property type="match status" value="1"/>
</dbReference>
<dbReference type="Pfam" id="PF12763">
    <property type="entry name" value="EH"/>
    <property type="match status" value="1"/>
</dbReference>
<dbReference type="Pfam" id="PF12761">
    <property type="entry name" value="End3"/>
    <property type="match status" value="1"/>
</dbReference>
<dbReference type="SMART" id="SM00054">
    <property type="entry name" value="EFh"/>
    <property type="match status" value="2"/>
</dbReference>
<dbReference type="SMART" id="SM00027">
    <property type="entry name" value="EH"/>
    <property type="match status" value="2"/>
</dbReference>
<dbReference type="SUPFAM" id="SSF47473">
    <property type="entry name" value="EF-hand"/>
    <property type="match status" value="2"/>
</dbReference>
<dbReference type="PROSITE" id="PS00018">
    <property type="entry name" value="EF_HAND_1"/>
    <property type="match status" value="1"/>
</dbReference>
<dbReference type="PROSITE" id="PS50222">
    <property type="entry name" value="EF_HAND_2"/>
    <property type="match status" value="2"/>
</dbReference>
<dbReference type="PROSITE" id="PS50031">
    <property type="entry name" value="EH"/>
    <property type="match status" value="2"/>
</dbReference>